<gene>
    <name evidence="1" type="primary">miaA</name>
    <name type="ordered locus">SPC_4507</name>
</gene>
<accession>C0Q6C8</accession>
<keyword id="KW-0067">ATP-binding</keyword>
<keyword id="KW-0460">Magnesium</keyword>
<keyword id="KW-0547">Nucleotide-binding</keyword>
<keyword id="KW-0808">Transferase</keyword>
<keyword id="KW-0819">tRNA processing</keyword>
<protein>
    <recommendedName>
        <fullName evidence="1">tRNA dimethylallyltransferase</fullName>
        <ecNumber evidence="1">2.5.1.75</ecNumber>
    </recommendedName>
    <alternativeName>
        <fullName evidence="1">Dimethylallyl diphosphate:tRNA dimethylallyltransferase</fullName>
        <shortName evidence="1">DMAPP:tRNA dimethylallyltransferase</shortName>
        <shortName evidence="1">DMATase</shortName>
    </alternativeName>
    <alternativeName>
        <fullName evidence="1">Isopentenyl-diphosphate:tRNA isopentenyltransferase</fullName>
        <shortName evidence="1">IPP transferase</shortName>
        <shortName evidence="1">IPPT</shortName>
        <shortName evidence="1">IPTase</shortName>
    </alternativeName>
</protein>
<dbReference type="EC" id="2.5.1.75" evidence="1"/>
<dbReference type="EMBL" id="CP000857">
    <property type="protein sequence ID" value="ACN48558.1"/>
    <property type="molecule type" value="Genomic_DNA"/>
</dbReference>
<dbReference type="RefSeq" id="WP_001000729.1">
    <property type="nucleotide sequence ID" value="NC_012125.1"/>
</dbReference>
<dbReference type="SMR" id="C0Q6C8"/>
<dbReference type="KEGG" id="sei:SPC_4507"/>
<dbReference type="HOGENOM" id="CLU_032616_0_0_6"/>
<dbReference type="Proteomes" id="UP000001599">
    <property type="component" value="Chromosome"/>
</dbReference>
<dbReference type="GO" id="GO:0005524">
    <property type="term" value="F:ATP binding"/>
    <property type="evidence" value="ECO:0007669"/>
    <property type="project" value="UniProtKB-UniRule"/>
</dbReference>
<dbReference type="GO" id="GO:0052381">
    <property type="term" value="F:tRNA dimethylallyltransferase activity"/>
    <property type="evidence" value="ECO:0007669"/>
    <property type="project" value="UniProtKB-UniRule"/>
</dbReference>
<dbReference type="GO" id="GO:0006400">
    <property type="term" value="P:tRNA modification"/>
    <property type="evidence" value="ECO:0007669"/>
    <property type="project" value="TreeGrafter"/>
</dbReference>
<dbReference type="FunFam" id="1.10.20.140:FF:000001">
    <property type="entry name" value="tRNA dimethylallyltransferase"/>
    <property type="match status" value="1"/>
</dbReference>
<dbReference type="FunFam" id="1.10.287.890:FF:000001">
    <property type="entry name" value="tRNA dimethylallyltransferase"/>
    <property type="match status" value="1"/>
</dbReference>
<dbReference type="Gene3D" id="1.10.20.140">
    <property type="match status" value="1"/>
</dbReference>
<dbReference type="Gene3D" id="1.10.287.890">
    <property type="entry name" value="Crystal structure of tRNA isopentenylpyrophosphate transferase (bh2366) domain"/>
    <property type="match status" value="1"/>
</dbReference>
<dbReference type="Gene3D" id="3.40.50.300">
    <property type="entry name" value="P-loop containing nucleotide triphosphate hydrolases"/>
    <property type="match status" value="1"/>
</dbReference>
<dbReference type="HAMAP" id="MF_00185">
    <property type="entry name" value="IPP_trans"/>
    <property type="match status" value="1"/>
</dbReference>
<dbReference type="InterPro" id="IPR039657">
    <property type="entry name" value="Dimethylallyltransferase"/>
</dbReference>
<dbReference type="InterPro" id="IPR018022">
    <property type="entry name" value="IPT"/>
</dbReference>
<dbReference type="InterPro" id="IPR027417">
    <property type="entry name" value="P-loop_NTPase"/>
</dbReference>
<dbReference type="NCBIfam" id="TIGR00174">
    <property type="entry name" value="miaA"/>
    <property type="match status" value="1"/>
</dbReference>
<dbReference type="PANTHER" id="PTHR11088">
    <property type="entry name" value="TRNA DIMETHYLALLYLTRANSFERASE"/>
    <property type="match status" value="1"/>
</dbReference>
<dbReference type="PANTHER" id="PTHR11088:SF60">
    <property type="entry name" value="TRNA DIMETHYLALLYLTRANSFERASE"/>
    <property type="match status" value="1"/>
</dbReference>
<dbReference type="Pfam" id="PF01715">
    <property type="entry name" value="IPPT"/>
    <property type="match status" value="1"/>
</dbReference>
<dbReference type="SUPFAM" id="SSF52540">
    <property type="entry name" value="P-loop containing nucleoside triphosphate hydrolases"/>
    <property type="match status" value="1"/>
</dbReference>
<evidence type="ECO:0000255" key="1">
    <source>
        <dbReference type="HAMAP-Rule" id="MF_00185"/>
    </source>
</evidence>
<feature type="chain" id="PRO_1000191864" description="tRNA dimethylallyltransferase">
    <location>
        <begin position="1"/>
        <end position="316"/>
    </location>
</feature>
<feature type="region of interest" description="Interaction with substrate tRNA" evidence="1">
    <location>
        <begin position="42"/>
        <end position="45"/>
    </location>
</feature>
<feature type="region of interest" description="Interaction with substrate tRNA" evidence="1">
    <location>
        <begin position="166"/>
        <end position="170"/>
    </location>
</feature>
<feature type="region of interest" description="Interaction with substrate tRNA" evidence="1">
    <location>
        <begin position="247"/>
        <end position="252"/>
    </location>
</feature>
<feature type="binding site" evidence="1">
    <location>
        <begin position="17"/>
        <end position="24"/>
    </location>
    <ligand>
        <name>ATP</name>
        <dbReference type="ChEBI" id="CHEBI:30616"/>
    </ligand>
</feature>
<feature type="binding site" evidence="1">
    <location>
        <begin position="19"/>
        <end position="24"/>
    </location>
    <ligand>
        <name>substrate</name>
    </ligand>
</feature>
<feature type="site" description="Interaction with substrate tRNA" evidence="1">
    <location>
        <position position="108"/>
    </location>
</feature>
<feature type="site" description="Interaction with substrate tRNA" evidence="1">
    <location>
        <position position="130"/>
    </location>
</feature>
<proteinExistence type="inferred from homology"/>
<name>MIAA_SALPC</name>
<organism>
    <name type="scientific">Salmonella paratyphi C (strain RKS4594)</name>
    <dbReference type="NCBI Taxonomy" id="476213"/>
    <lineage>
        <taxon>Bacteria</taxon>
        <taxon>Pseudomonadati</taxon>
        <taxon>Pseudomonadota</taxon>
        <taxon>Gammaproteobacteria</taxon>
        <taxon>Enterobacterales</taxon>
        <taxon>Enterobacteriaceae</taxon>
        <taxon>Salmonella</taxon>
    </lineage>
</organism>
<reference key="1">
    <citation type="journal article" date="2009" name="PLoS ONE">
        <title>Salmonella paratyphi C: genetic divergence from Salmonella choleraesuis and pathogenic convergence with Salmonella typhi.</title>
        <authorList>
            <person name="Liu W.-Q."/>
            <person name="Feng Y."/>
            <person name="Wang Y."/>
            <person name="Zou Q.-H."/>
            <person name="Chen F."/>
            <person name="Guo J.-T."/>
            <person name="Peng Y.-H."/>
            <person name="Jin Y."/>
            <person name="Li Y.-G."/>
            <person name="Hu S.-N."/>
            <person name="Johnston R.N."/>
            <person name="Liu G.-R."/>
            <person name="Liu S.-L."/>
        </authorList>
    </citation>
    <scope>NUCLEOTIDE SEQUENCE [LARGE SCALE GENOMIC DNA]</scope>
    <source>
        <strain>RKS4594</strain>
    </source>
</reference>
<sequence length="316" mass="35112">MNDVSKASLPKAIFLMGPTASGKTALAIALRKVLPVELISVDSALIYRGMDIGTAKPNADELKAAPHRLLDIRDPSQAYSAADFRRDALAQMAEITAAGRIPLLVGGTMLYFKALLEGLSPLPSADPEVRSRIEQQAAELGWEALHQQLQEIDPVAAARIHPNDPQRLSRALEVFFISGKTLTELTQTSGDALPYQVHQFAIAPASRELLHQRIELRFHQMLASGFEAEVRALFARGDLHTDLPSIRCVGYRQMWSYIEGEISYDEMVYRGVCATRQLAKRQMTWLRGWEGVRWLDSENPDRARKEVLQVVGAIAD</sequence>
<comment type="function">
    <text evidence="1">Catalyzes the transfer of a dimethylallyl group onto the adenine at position 37 in tRNAs that read codons beginning with uridine, leading to the formation of N6-(dimethylallyl)adenosine (i(6)A).</text>
</comment>
<comment type="catalytic activity">
    <reaction evidence="1">
        <text>adenosine(37) in tRNA + dimethylallyl diphosphate = N(6)-dimethylallyladenosine(37) in tRNA + diphosphate</text>
        <dbReference type="Rhea" id="RHEA:26482"/>
        <dbReference type="Rhea" id="RHEA-COMP:10162"/>
        <dbReference type="Rhea" id="RHEA-COMP:10375"/>
        <dbReference type="ChEBI" id="CHEBI:33019"/>
        <dbReference type="ChEBI" id="CHEBI:57623"/>
        <dbReference type="ChEBI" id="CHEBI:74411"/>
        <dbReference type="ChEBI" id="CHEBI:74415"/>
        <dbReference type="EC" id="2.5.1.75"/>
    </reaction>
</comment>
<comment type="cofactor">
    <cofactor evidence="1">
        <name>Mg(2+)</name>
        <dbReference type="ChEBI" id="CHEBI:18420"/>
    </cofactor>
</comment>
<comment type="subunit">
    <text evidence="1">Monomer.</text>
</comment>
<comment type="similarity">
    <text evidence="1">Belongs to the IPP transferase family.</text>
</comment>